<organism>
    <name type="scientific">Streptococcus pneumoniae (strain ATCC 700669 / Spain 23F-1)</name>
    <dbReference type="NCBI Taxonomy" id="561276"/>
    <lineage>
        <taxon>Bacteria</taxon>
        <taxon>Bacillati</taxon>
        <taxon>Bacillota</taxon>
        <taxon>Bacilli</taxon>
        <taxon>Lactobacillales</taxon>
        <taxon>Streptococcaceae</taxon>
        <taxon>Streptococcus</taxon>
    </lineage>
</organism>
<accession>B8ZLK0</accession>
<protein>
    <recommendedName>
        <fullName evidence="1">Aspartyl/glutamyl-tRNA(Asn/Gln) amidotransferase subunit B</fullName>
        <shortName evidence="1">Asp/Glu-ADT subunit B</shortName>
        <ecNumber evidence="1">6.3.5.-</ecNumber>
    </recommendedName>
</protein>
<proteinExistence type="inferred from homology"/>
<comment type="function">
    <text evidence="1">Allows the formation of correctly charged Asn-tRNA(Asn) or Gln-tRNA(Gln) through the transamidation of misacylated Asp-tRNA(Asn) or Glu-tRNA(Gln) in organisms which lack either or both of asparaginyl-tRNA or glutaminyl-tRNA synthetases. The reaction takes place in the presence of glutamine and ATP through an activated phospho-Asp-tRNA(Asn) or phospho-Glu-tRNA(Gln).</text>
</comment>
<comment type="catalytic activity">
    <reaction evidence="1">
        <text>L-glutamyl-tRNA(Gln) + L-glutamine + ATP + H2O = L-glutaminyl-tRNA(Gln) + L-glutamate + ADP + phosphate + H(+)</text>
        <dbReference type="Rhea" id="RHEA:17521"/>
        <dbReference type="Rhea" id="RHEA-COMP:9681"/>
        <dbReference type="Rhea" id="RHEA-COMP:9684"/>
        <dbReference type="ChEBI" id="CHEBI:15377"/>
        <dbReference type="ChEBI" id="CHEBI:15378"/>
        <dbReference type="ChEBI" id="CHEBI:29985"/>
        <dbReference type="ChEBI" id="CHEBI:30616"/>
        <dbReference type="ChEBI" id="CHEBI:43474"/>
        <dbReference type="ChEBI" id="CHEBI:58359"/>
        <dbReference type="ChEBI" id="CHEBI:78520"/>
        <dbReference type="ChEBI" id="CHEBI:78521"/>
        <dbReference type="ChEBI" id="CHEBI:456216"/>
    </reaction>
</comment>
<comment type="catalytic activity">
    <reaction evidence="1">
        <text>L-aspartyl-tRNA(Asn) + L-glutamine + ATP + H2O = L-asparaginyl-tRNA(Asn) + L-glutamate + ADP + phosphate + 2 H(+)</text>
        <dbReference type="Rhea" id="RHEA:14513"/>
        <dbReference type="Rhea" id="RHEA-COMP:9674"/>
        <dbReference type="Rhea" id="RHEA-COMP:9677"/>
        <dbReference type="ChEBI" id="CHEBI:15377"/>
        <dbReference type="ChEBI" id="CHEBI:15378"/>
        <dbReference type="ChEBI" id="CHEBI:29985"/>
        <dbReference type="ChEBI" id="CHEBI:30616"/>
        <dbReference type="ChEBI" id="CHEBI:43474"/>
        <dbReference type="ChEBI" id="CHEBI:58359"/>
        <dbReference type="ChEBI" id="CHEBI:78515"/>
        <dbReference type="ChEBI" id="CHEBI:78516"/>
        <dbReference type="ChEBI" id="CHEBI:456216"/>
    </reaction>
</comment>
<comment type="subunit">
    <text evidence="1">Heterotrimer of A, B and C subunits.</text>
</comment>
<comment type="similarity">
    <text evidence="1">Belongs to the GatB/GatE family. GatB subfamily.</text>
</comment>
<reference key="1">
    <citation type="journal article" date="2009" name="J. Bacteriol.">
        <title>Role of conjugative elements in the evolution of the multidrug-resistant pandemic clone Streptococcus pneumoniae Spain23F ST81.</title>
        <authorList>
            <person name="Croucher N.J."/>
            <person name="Walker D."/>
            <person name="Romero P."/>
            <person name="Lennard N."/>
            <person name="Paterson G.K."/>
            <person name="Bason N.C."/>
            <person name="Mitchell A.M."/>
            <person name="Quail M.A."/>
            <person name="Andrew P.W."/>
            <person name="Parkhill J."/>
            <person name="Bentley S.D."/>
            <person name="Mitchell T.J."/>
        </authorList>
    </citation>
    <scope>NUCLEOTIDE SEQUENCE [LARGE SCALE GENOMIC DNA]</scope>
    <source>
        <strain>ATCC 700669 / Spain 23F-1</strain>
    </source>
</reference>
<name>GATB_STRPJ</name>
<evidence type="ECO:0000255" key="1">
    <source>
        <dbReference type="HAMAP-Rule" id="MF_00121"/>
    </source>
</evidence>
<keyword id="KW-0067">ATP-binding</keyword>
<keyword id="KW-0436">Ligase</keyword>
<keyword id="KW-0547">Nucleotide-binding</keyword>
<keyword id="KW-0648">Protein biosynthesis</keyword>
<sequence>MNFETVIGLEVHVELNTNSKIFSPTSAHFGNDQNANTNVIDWSFPGVLPVLNKGVVDAGIKAALALNMDIHKKMHFDRKNYFYPDNPKAYQISQFDEPIGYNGWIEVELEDGTTKKIGIERAHLEEDAGKNTHGTDGYSYVDLNRQGVPLIEIVSEADMRSPEEAYAYLTALKEVIQYAGISDVKMEEGSMRVDANISLRPYGQEKFGTKTELKNLNSFSNVRKGLEYEVQRQAEILRSGGQIRQETRRYDEANKATILMRVKEGAADYRYFPEPDLPLFEISDEWIEEMRTELPEFPKERRARYVSDLGLSDYDASQLTANKVTSNFFEKAVALGGDAKQVSNWLQGEVAQFLNAEGKTLEQIELTPENLVEMITIIEDGTISSKIAKKVFVHLAKNGGGAREYVEKAGMVQISDPAILIPIIHQVFADNEAAVADFKSGKRNADKAFTGFLMRATKGQANPQVALKLLAQELAKLKEN</sequence>
<feature type="chain" id="PRO_1000122537" description="Aspartyl/glutamyl-tRNA(Asn/Gln) amidotransferase subunit B">
    <location>
        <begin position="1"/>
        <end position="480"/>
    </location>
</feature>
<gene>
    <name evidence="1" type="primary">gatB</name>
    <name type="ordered locus">SPN23F04090</name>
</gene>
<dbReference type="EC" id="6.3.5.-" evidence="1"/>
<dbReference type="EMBL" id="FM211187">
    <property type="protein sequence ID" value="CAR68258.1"/>
    <property type="molecule type" value="Genomic_DNA"/>
</dbReference>
<dbReference type="RefSeq" id="WP_001008663.1">
    <property type="nucleotide sequence ID" value="NC_011900.1"/>
</dbReference>
<dbReference type="SMR" id="B8ZLK0"/>
<dbReference type="KEGG" id="sne:SPN23F04090"/>
<dbReference type="HOGENOM" id="CLU_019240_0_0_9"/>
<dbReference type="GO" id="GO:0050566">
    <property type="term" value="F:asparaginyl-tRNA synthase (glutamine-hydrolyzing) activity"/>
    <property type="evidence" value="ECO:0007669"/>
    <property type="project" value="RHEA"/>
</dbReference>
<dbReference type="GO" id="GO:0005524">
    <property type="term" value="F:ATP binding"/>
    <property type="evidence" value="ECO:0007669"/>
    <property type="project" value="UniProtKB-KW"/>
</dbReference>
<dbReference type="GO" id="GO:0050567">
    <property type="term" value="F:glutaminyl-tRNA synthase (glutamine-hydrolyzing) activity"/>
    <property type="evidence" value="ECO:0007669"/>
    <property type="project" value="UniProtKB-UniRule"/>
</dbReference>
<dbReference type="GO" id="GO:0070681">
    <property type="term" value="P:glutaminyl-tRNAGln biosynthesis via transamidation"/>
    <property type="evidence" value="ECO:0007669"/>
    <property type="project" value="TreeGrafter"/>
</dbReference>
<dbReference type="GO" id="GO:0006412">
    <property type="term" value="P:translation"/>
    <property type="evidence" value="ECO:0007669"/>
    <property type="project" value="UniProtKB-UniRule"/>
</dbReference>
<dbReference type="FunFam" id="1.10.10.410:FF:000001">
    <property type="entry name" value="Aspartyl/glutamyl-tRNA(Asn/Gln) amidotransferase subunit B"/>
    <property type="match status" value="1"/>
</dbReference>
<dbReference type="FunFam" id="1.10.150.380:FF:000001">
    <property type="entry name" value="Aspartyl/glutamyl-tRNA(Asn/Gln) amidotransferase subunit B"/>
    <property type="match status" value="1"/>
</dbReference>
<dbReference type="Gene3D" id="1.10.10.410">
    <property type="match status" value="1"/>
</dbReference>
<dbReference type="Gene3D" id="1.10.150.380">
    <property type="entry name" value="GatB domain, N-terminal subdomain"/>
    <property type="match status" value="1"/>
</dbReference>
<dbReference type="HAMAP" id="MF_00121">
    <property type="entry name" value="GatB"/>
    <property type="match status" value="1"/>
</dbReference>
<dbReference type="InterPro" id="IPR017959">
    <property type="entry name" value="Asn/Gln-tRNA_amidoTrfase_suB/E"/>
</dbReference>
<dbReference type="InterPro" id="IPR006075">
    <property type="entry name" value="Asn/Gln-tRNA_Trfase_suB/E_cat"/>
</dbReference>
<dbReference type="InterPro" id="IPR018027">
    <property type="entry name" value="Asn/Gln_amidotransferase"/>
</dbReference>
<dbReference type="InterPro" id="IPR003789">
    <property type="entry name" value="Asn/Gln_tRNA_amidoTrase-B-like"/>
</dbReference>
<dbReference type="InterPro" id="IPR004413">
    <property type="entry name" value="GatB"/>
</dbReference>
<dbReference type="InterPro" id="IPR042114">
    <property type="entry name" value="GatB_C_1"/>
</dbReference>
<dbReference type="InterPro" id="IPR023168">
    <property type="entry name" value="GatB_Yqey_C_2"/>
</dbReference>
<dbReference type="InterPro" id="IPR017958">
    <property type="entry name" value="Gln-tRNA_amidoTrfase_suB_CS"/>
</dbReference>
<dbReference type="InterPro" id="IPR014746">
    <property type="entry name" value="Gln_synth/guanido_kin_cat_dom"/>
</dbReference>
<dbReference type="NCBIfam" id="TIGR00133">
    <property type="entry name" value="gatB"/>
    <property type="match status" value="1"/>
</dbReference>
<dbReference type="NCBIfam" id="NF004011">
    <property type="entry name" value="PRK05477.1-1"/>
    <property type="match status" value="1"/>
</dbReference>
<dbReference type="NCBIfam" id="NF004012">
    <property type="entry name" value="PRK05477.1-2"/>
    <property type="match status" value="1"/>
</dbReference>
<dbReference type="NCBIfam" id="NF004014">
    <property type="entry name" value="PRK05477.1-4"/>
    <property type="match status" value="1"/>
</dbReference>
<dbReference type="PANTHER" id="PTHR11659">
    <property type="entry name" value="GLUTAMYL-TRNA GLN AMIDOTRANSFERASE SUBUNIT B MITOCHONDRIAL AND PROKARYOTIC PET112-RELATED"/>
    <property type="match status" value="1"/>
</dbReference>
<dbReference type="PANTHER" id="PTHR11659:SF0">
    <property type="entry name" value="GLUTAMYL-TRNA(GLN) AMIDOTRANSFERASE SUBUNIT B, MITOCHONDRIAL"/>
    <property type="match status" value="1"/>
</dbReference>
<dbReference type="Pfam" id="PF02934">
    <property type="entry name" value="GatB_N"/>
    <property type="match status" value="1"/>
</dbReference>
<dbReference type="Pfam" id="PF02637">
    <property type="entry name" value="GatB_Yqey"/>
    <property type="match status" value="1"/>
</dbReference>
<dbReference type="SMART" id="SM00845">
    <property type="entry name" value="GatB_Yqey"/>
    <property type="match status" value="1"/>
</dbReference>
<dbReference type="SUPFAM" id="SSF89095">
    <property type="entry name" value="GatB/YqeY motif"/>
    <property type="match status" value="1"/>
</dbReference>
<dbReference type="SUPFAM" id="SSF55931">
    <property type="entry name" value="Glutamine synthetase/guanido kinase"/>
    <property type="match status" value="1"/>
</dbReference>
<dbReference type="PROSITE" id="PS01234">
    <property type="entry name" value="GATB"/>
    <property type="match status" value="1"/>
</dbReference>